<name>YBC9_ENCCU</name>
<accession>Q8SQU8</accession>
<feature type="chain" id="PRO_0000385506" description="Probable cell division protein kinase ECU11_1290">
    <location>
        <begin position="1"/>
        <end position="315"/>
    </location>
</feature>
<feature type="domain" description="Protein kinase" evidence="2">
    <location>
        <begin position="13"/>
        <end position="294"/>
    </location>
</feature>
<feature type="active site" description="Proton acceptor" evidence="2 3">
    <location>
        <position position="138"/>
    </location>
</feature>
<feature type="binding site" evidence="2">
    <location>
        <begin position="19"/>
        <end position="27"/>
    </location>
    <ligand>
        <name>ATP</name>
        <dbReference type="ChEBI" id="CHEBI:30616"/>
    </ligand>
</feature>
<feature type="binding site" evidence="2">
    <location>
        <position position="42"/>
    </location>
    <ligand>
        <name>ATP</name>
        <dbReference type="ChEBI" id="CHEBI:30616"/>
    </ligand>
</feature>
<gene>
    <name type="ordered locus">ECU11_1290</name>
</gene>
<sequence>MRSGGRCNSIENYEKVCRISSGSFGNVYRVRRKTDNRVFALKRMNPSMCYDTNGFSILYIREVMILKHIRHRNIMEIEEVVEGCEINDFFIVMECCDTDLRSVIHSVGKIGMKAARFLTCQMLKGLKFLHGAGIVHRDLKPSNILLMRDGGLRIADFGLARAIESQMTNLVVTLWYRPIEILLGSETYDESIDMWSVGCVVGEMLRGEPILAGEGEMDQLDRIFRLLGYPTDADFEGLDLPHFKNIRRPSTFEASFEGDFECYGEEAASFVRNLLSFDPRKRCTASQGLCSGFVADAEECPGELVDIVGRCTGDI</sequence>
<proteinExistence type="inferred from homology"/>
<evidence type="ECO:0000250" key="1"/>
<evidence type="ECO:0000255" key="2">
    <source>
        <dbReference type="PROSITE-ProRule" id="PRU00159"/>
    </source>
</evidence>
<evidence type="ECO:0000255" key="3">
    <source>
        <dbReference type="PROSITE-ProRule" id="PRU10027"/>
    </source>
</evidence>
<evidence type="ECO:0000305" key="4"/>
<reference key="1">
    <citation type="journal article" date="2001" name="Nature">
        <title>Genome sequence and gene compaction of the eukaryote parasite Encephalitozoon cuniculi.</title>
        <authorList>
            <person name="Katinka M.D."/>
            <person name="Duprat S."/>
            <person name="Cornillot E."/>
            <person name="Metenier G."/>
            <person name="Thomarat F."/>
            <person name="Prensier G."/>
            <person name="Barbe V."/>
            <person name="Peyretaillade E."/>
            <person name="Brottier P."/>
            <person name="Wincker P."/>
            <person name="Delbac F."/>
            <person name="El Alaoui H."/>
            <person name="Peyret P."/>
            <person name="Saurin W."/>
            <person name="Gouy M."/>
            <person name="Weissenbach J."/>
            <person name="Vivares C.P."/>
        </authorList>
    </citation>
    <scope>NUCLEOTIDE SEQUENCE [LARGE SCALE GENOMIC DNA]</scope>
    <source>
        <strain>GB-M1</strain>
    </source>
</reference>
<reference key="2">
    <citation type="journal article" date="2009" name="BMC Genomics">
        <title>Identification of transcriptional signals in Encephalitozoon cuniculi widespread among Microsporidia phylum: support for accurate structural genome annotation.</title>
        <authorList>
            <person name="Peyretaillade E."/>
            <person name="Goncalves O."/>
            <person name="Terrat S."/>
            <person name="Dugat-Bony E."/>
            <person name="Wincker P."/>
            <person name="Cornman R.S."/>
            <person name="Evans J.D."/>
            <person name="Delbac F."/>
            <person name="Peyret P."/>
        </authorList>
    </citation>
    <scope>GENOME REANNOTATION</scope>
    <source>
        <strain>GB-M1</strain>
    </source>
</reference>
<reference key="3">
    <citation type="journal article" date="2007" name="BMC Genomics">
        <title>The complement of protein kinases of the microsporidium Encephalitozoon cuniculi in relation to those of Saccharomyces cerevisiae and Schizosaccharomyces pombe.</title>
        <authorList>
            <person name="Miranda-Saavedra D."/>
            <person name="Stark M.J.R."/>
            <person name="Packer J.C."/>
            <person name="Vivares C.P."/>
            <person name="Doerig C."/>
            <person name="Barton G.J."/>
        </authorList>
    </citation>
    <scope>PREDICTION OF FUNCTION</scope>
</reference>
<organism>
    <name type="scientific">Encephalitozoon cuniculi (strain GB-M1)</name>
    <name type="common">Microsporidian parasite</name>
    <dbReference type="NCBI Taxonomy" id="284813"/>
    <lineage>
        <taxon>Eukaryota</taxon>
        <taxon>Fungi</taxon>
        <taxon>Fungi incertae sedis</taxon>
        <taxon>Microsporidia</taxon>
        <taxon>Unikaryonidae</taxon>
        <taxon>Encephalitozoon</taxon>
    </lineage>
</organism>
<protein>
    <recommendedName>
        <fullName>Probable cell division protein kinase ECU11_1290</fullName>
        <ecNumber>2.7.11.22</ecNumber>
    </recommendedName>
</protein>
<comment type="function">
    <text evidence="1">May play a role in the control of the eukaryotic cell cycle.</text>
</comment>
<comment type="catalytic activity">
    <reaction>
        <text>L-seryl-[protein] + ATP = O-phospho-L-seryl-[protein] + ADP + H(+)</text>
        <dbReference type="Rhea" id="RHEA:17989"/>
        <dbReference type="Rhea" id="RHEA-COMP:9863"/>
        <dbReference type="Rhea" id="RHEA-COMP:11604"/>
        <dbReference type="ChEBI" id="CHEBI:15378"/>
        <dbReference type="ChEBI" id="CHEBI:29999"/>
        <dbReference type="ChEBI" id="CHEBI:30616"/>
        <dbReference type="ChEBI" id="CHEBI:83421"/>
        <dbReference type="ChEBI" id="CHEBI:456216"/>
        <dbReference type="EC" id="2.7.11.22"/>
    </reaction>
</comment>
<comment type="catalytic activity">
    <reaction>
        <text>L-threonyl-[protein] + ATP = O-phospho-L-threonyl-[protein] + ADP + H(+)</text>
        <dbReference type="Rhea" id="RHEA:46608"/>
        <dbReference type="Rhea" id="RHEA-COMP:11060"/>
        <dbReference type="Rhea" id="RHEA-COMP:11605"/>
        <dbReference type="ChEBI" id="CHEBI:15378"/>
        <dbReference type="ChEBI" id="CHEBI:30013"/>
        <dbReference type="ChEBI" id="CHEBI:30616"/>
        <dbReference type="ChEBI" id="CHEBI:61977"/>
        <dbReference type="ChEBI" id="CHEBI:456216"/>
        <dbReference type="EC" id="2.7.11.22"/>
    </reaction>
</comment>
<comment type="subcellular location">
    <subcellularLocation>
        <location evidence="4">Nucleus</location>
    </subcellularLocation>
</comment>
<comment type="similarity">
    <text evidence="4">Belongs to the protein kinase superfamily. CMGC Ser/Thr protein kinase family. CDC2/CDKX subfamily.</text>
</comment>
<keyword id="KW-0067">ATP-binding</keyword>
<keyword id="KW-0131">Cell cycle</keyword>
<keyword id="KW-0132">Cell division</keyword>
<keyword id="KW-0418">Kinase</keyword>
<keyword id="KW-0498">Mitosis</keyword>
<keyword id="KW-0547">Nucleotide-binding</keyword>
<keyword id="KW-0539">Nucleus</keyword>
<keyword id="KW-1185">Reference proteome</keyword>
<keyword id="KW-0723">Serine/threonine-protein kinase</keyword>
<keyword id="KW-0808">Transferase</keyword>
<dbReference type="EC" id="2.7.11.22"/>
<dbReference type="EMBL" id="AL590450">
    <property type="protein sequence ID" value="CAD26039.2"/>
    <property type="molecule type" value="Genomic_DNA"/>
</dbReference>
<dbReference type="RefSeq" id="NP_586435.2">
    <property type="nucleotide sequence ID" value="NM_001042268.2"/>
</dbReference>
<dbReference type="SMR" id="Q8SQU8"/>
<dbReference type="STRING" id="284813.Q8SQU8"/>
<dbReference type="GeneID" id="860089"/>
<dbReference type="KEGG" id="ecu:ECU11_1290"/>
<dbReference type="VEuPathDB" id="MicrosporidiaDB:ECU11_1290"/>
<dbReference type="HOGENOM" id="CLU_000288_181_1_1"/>
<dbReference type="InParanoid" id="Q8SQU8"/>
<dbReference type="OrthoDB" id="1732493at2759"/>
<dbReference type="Proteomes" id="UP000000819">
    <property type="component" value="Chromosome XI"/>
</dbReference>
<dbReference type="GO" id="GO:0005634">
    <property type="term" value="C:nucleus"/>
    <property type="evidence" value="ECO:0007669"/>
    <property type="project" value="UniProtKB-SubCell"/>
</dbReference>
<dbReference type="GO" id="GO:0005524">
    <property type="term" value="F:ATP binding"/>
    <property type="evidence" value="ECO:0007669"/>
    <property type="project" value="UniProtKB-KW"/>
</dbReference>
<dbReference type="GO" id="GO:0004693">
    <property type="term" value="F:cyclin-dependent protein serine/threonine kinase activity"/>
    <property type="evidence" value="ECO:0007669"/>
    <property type="project" value="UniProtKB-EC"/>
</dbReference>
<dbReference type="GO" id="GO:0106310">
    <property type="term" value="F:protein serine kinase activity"/>
    <property type="evidence" value="ECO:0007669"/>
    <property type="project" value="RHEA"/>
</dbReference>
<dbReference type="GO" id="GO:0051301">
    <property type="term" value="P:cell division"/>
    <property type="evidence" value="ECO:0007669"/>
    <property type="project" value="UniProtKB-KW"/>
</dbReference>
<dbReference type="GO" id="GO:0007346">
    <property type="term" value="P:regulation of mitotic cell cycle"/>
    <property type="evidence" value="ECO:0007669"/>
    <property type="project" value="TreeGrafter"/>
</dbReference>
<dbReference type="FunFam" id="1.10.510.10:FF:000624">
    <property type="entry name" value="Mitogen-activated protein kinase"/>
    <property type="match status" value="1"/>
</dbReference>
<dbReference type="Gene3D" id="3.30.200.20">
    <property type="entry name" value="Phosphorylase Kinase, domain 1"/>
    <property type="match status" value="1"/>
</dbReference>
<dbReference type="Gene3D" id="1.10.510.10">
    <property type="entry name" value="Transferase(Phosphotransferase) domain 1"/>
    <property type="match status" value="1"/>
</dbReference>
<dbReference type="InterPro" id="IPR050108">
    <property type="entry name" value="CDK"/>
</dbReference>
<dbReference type="InterPro" id="IPR011009">
    <property type="entry name" value="Kinase-like_dom_sf"/>
</dbReference>
<dbReference type="InterPro" id="IPR000719">
    <property type="entry name" value="Prot_kinase_dom"/>
</dbReference>
<dbReference type="InterPro" id="IPR008271">
    <property type="entry name" value="Ser/Thr_kinase_AS"/>
</dbReference>
<dbReference type="PANTHER" id="PTHR24056">
    <property type="entry name" value="CELL DIVISION PROTEIN KINASE"/>
    <property type="match status" value="1"/>
</dbReference>
<dbReference type="PANTHER" id="PTHR24056:SF107">
    <property type="entry name" value="CYCLIN-DEPENDENT KINASE 11A-RELATED"/>
    <property type="match status" value="1"/>
</dbReference>
<dbReference type="Pfam" id="PF00069">
    <property type="entry name" value="Pkinase"/>
    <property type="match status" value="1"/>
</dbReference>
<dbReference type="SMART" id="SM00220">
    <property type="entry name" value="S_TKc"/>
    <property type="match status" value="1"/>
</dbReference>
<dbReference type="SUPFAM" id="SSF56112">
    <property type="entry name" value="Protein kinase-like (PK-like)"/>
    <property type="match status" value="1"/>
</dbReference>
<dbReference type="PROSITE" id="PS50011">
    <property type="entry name" value="PROTEIN_KINASE_DOM"/>
    <property type="match status" value="1"/>
</dbReference>
<dbReference type="PROSITE" id="PS00108">
    <property type="entry name" value="PROTEIN_KINASE_ST"/>
    <property type="match status" value="1"/>
</dbReference>